<comment type="function">
    <text evidence="1">Specifically methylates the uridine in position 2552 of 23S rRNA at the 2'-O position of the ribose in the fully assembled 50S ribosomal subunit.</text>
</comment>
<comment type="catalytic activity">
    <reaction evidence="1">
        <text>uridine(2552) in 23S rRNA + S-adenosyl-L-methionine = 2'-O-methyluridine(2552) in 23S rRNA + S-adenosyl-L-homocysteine + H(+)</text>
        <dbReference type="Rhea" id="RHEA:42720"/>
        <dbReference type="Rhea" id="RHEA-COMP:10202"/>
        <dbReference type="Rhea" id="RHEA-COMP:10203"/>
        <dbReference type="ChEBI" id="CHEBI:15378"/>
        <dbReference type="ChEBI" id="CHEBI:57856"/>
        <dbReference type="ChEBI" id="CHEBI:59789"/>
        <dbReference type="ChEBI" id="CHEBI:65315"/>
        <dbReference type="ChEBI" id="CHEBI:74478"/>
        <dbReference type="EC" id="2.1.1.166"/>
    </reaction>
</comment>
<comment type="subcellular location">
    <subcellularLocation>
        <location evidence="1">Cytoplasm</location>
    </subcellularLocation>
</comment>
<comment type="similarity">
    <text evidence="1">Belongs to the class I-like SAM-binding methyltransferase superfamily. RNA methyltransferase RlmE family.</text>
</comment>
<accession>Q92J64</accession>
<protein>
    <recommendedName>
        <fullName evidence="1">Ribosomal RNA large subunit methyltransferase E</fullName>
        <ecNumber evidence="1">2.1.1.166</ecNumber>
    </recommendedName>
    <alternativeName>
        <fullName evidence="1">23S rRNA Um2552 methyltransferase</fullName>
    </alternativeName>
    <alternativeName>
        <fullName evidence="1">rRNA (uridine-2'-O-)-methyltransferase</fullName>
    </alternativeName>
</protein>
<evidence type="ECO:0000255" key="1">
    <source>
        <dbReference type="HAMAP-Rule" id="MF_01547"/>
    </source>
</evidence>
<reference key="1">
    <citation type="journal article" date="2001" name="Science">
        <title>Mechanisms of evolution in Rickettsia conorii and R. prowazekii.</title>
        <authorList>
            <person name="Ogata H."/>
            <person name="Audic S."/>
            <person name="Renesto-Audiffren P."/>
            <person name="Fournier P.-E."/>
            <person name="Barbe V."/>
            <person name="Samson D."/>
            <person name="Roux V."/>
            <person name="Cossart P."/>
            <person name="Weissenbach J."/>
            <person name="Claverie J.-M."/>
            <person name="Raoult D."/>
        </authorList>
    </citation>
    <scope>NUCLEOTIDE SEQUENCE [LARGE SCALE GENOMIC DNA]</scope>
    <source>
        <strain>ATCC VR-613 / Malish 7</strain>
    </source>
</reference>
<feature type="chain" id="PRO_0000155532" description="Ribosomal RNA large subunit methyltransferase E">
    <location>
        <begin position="1"/>
        <end position="227"/>
    </location>
</feature>
<feature type="active site" description="Proton acceptor" evidence="1">
    <location>
        <position position="183"/>
    </location>
</feature>
<feature type="binding site" evidence="1">
    <location>
        <position position="78"/>
    </location>
    <ligand>
        <name>S-adenosyl-L-methionine</name>
        <dbReference type="ChEBI" id="CHEBI:59789"/>
    </ligand>
</feature>
<feature type="binding site" evidence="1">
    <location>
        <position position="80"/>
    </location>
    <ligand>
        <name>S-adenosyl-L-methionine</name>
        <dbReference type="ChEBI" id="CHEBI:59789"/>
    </ligand>
</feature>
<feature type="binding site" evidence="1">
    <location>
        <position position="103"/>
    </location>
    <ligand>
        <name>S-adenosyl-L-methionine</name>
        <dbReference type="ChEBI" id="CHEBI:59789"/>
    </ligand>
</feature>
<feature type="binding site" evidence="1">
    <location>
        <position position="119"/>
    </location>
    <ligand>
        <name>S-adenosyl-L-methionine</name>
        <dbReference type="ChEBI" id="CHEBI:59789"/>
    </ligand>
</feature>
<feature type="binding site" evidence="1">
    <location>
        <position position="143"/>
    </location>
    <ligand>
        <name>S-adenosyl-L-methionine</name>
        <dbReference type="ChEBI" id="CHEBI:59789"/>
    </ligand>
</feature>
<keyword id="KW-0963">Cytoplasm</keyword>
<keyword id="KW-0489">Methyltransferase</keyword>
<keyword id="KW-0698">rRNA processing</keyword>
<keyword id="KW-0949">S-adenosyl-L-methionine</keyword>
<keyword id="KW-0808">Transferase</keyword>
<name>RLME_RICCN</name>
<organism>
    <name type="scientific">Rickettsia conorii (strain ATCC VR-613 / Malish 7)</name>
    <dbReference type="NCBI Taxonomy" id="272944"/>
    <lineage>
        <taxon>Bacteria</taxon>
        <taxon>Pseudomonadati</taxon>
        <taxon>Pseudomonadota</taxon>
        <taxon>Alphaproteobacteria</taxon>
        <taxon>Rickettsiales</taxon>
        <taxon>Rickettsiaceae</taxon>
        <taxon>Rickettsieae</taxon>
        <taxon>Rickettsia</taxon>
        <taxon>spotted fever group</taxon>
    </lineage>
</organism>
<gene>
    <name evidence="1" type="primary">rlmE</name>
    <name evidence="1" type="synonym">ftsJ</name>
    <name evidence="1" type="synonym">rrmJ</name>
    <name type="ordered locus">RC0205</name>
</gene>
<dbReference type="EC" id="2.1.1.166" evidence="1"/>
<dbReference type="EMBL" id="AE006914">
    <property type="protein sequence ID" value="AAL02743.1"/>
    <property type="molecule type" value="Genomic_DNA"/>
</dbReference>
<dbReference type="PIR" id="E97725">
    <property type="entry name" value="E97725"/>
</dbReference>
<dbReference type="RefSeq" id="WP_004996598.1">
    <property type="nucleotide sequence ID" value="NC_003103.1"/>
</dbReference>
<dbReference type="SMR" id="Q92J64"/>
<dbReference type="KEGG" id="rco:RC0205"/>
<dbReference type="HOGENOM" id="CLU_009422_4_0_5"/>
<dbReference type="Proteomes" id="UP000000816">
    <property type="component" value="Chromosome"/>
</dbReference>
<dbReference type="GO" id="GO:0005737">
    <property type="term" value="C:cytoplasm"/>
    <property type="evidence" value="ECO:0007669"/>
    <property type="project" value="UniProtKB-SubCell"/>
</dbReference>
<dbReference type="GO" id="GO:0008650">
    <property type="term" value="F:rRNA (uridine-2'-O-)-methyltransferase activity"/>
    <property type="evidence" value="ECO:0007669"/>
    <property type="project" value="UniProtKB-UniRule"/>
</dbReference>
<dbReference type="FunFam" id="3.40.50.150:FF:000354">
    <property type="entry name" value="Ribosomal RNA large subunit methyltransferase E"/>
    <property type="match status" value="1"/>
</dbReference>
<dbReference type="Gene3D" id="3.40.50.150">
    <property type="entry name" value="Vaccinia Virus protein VP39"/>
    <property type="match status" value="1"/>
</dbReference>
<dbReference type="HAMAP" id="MF_01547">
    <property type="entry name" value="RNA_methyltr_E"/>
    <property type="match status" value="1"/>
</dbReference>
<dbReference type="InterPro" id="IPR050082">
    <property type="entry name" value="RNA_methyltr_RlmE"/>
</dbReference>
<dbReference type="InterPro" id="IPR002877">
    <property type="entry name" value="RNA_MeTrfase_FtsJ_dom"/>
</dbReference>
<dbReference type="InterPro" id="IPR015507">
    <property type="entry name" value="rRNA-MeTfrase_E"/>
</dbReference>
<dbReference type="InterPro" id="IPR029063">
    <property type="entry name" value="SAM-dependent_MTases_sf"/>
</dbReference>
<dbReference type="PANTHER" id="PTHR10920">
    <property type="entry name" value="RIBOSOMAL RNA METHYLTRANSFERASE"/>
    <property type="match status" value="1"/>
</dbReference>
<dbReference type="PANTHER" id="PTHR10920:SF18">
    <property type="entry name" value="RRNA METHYLTRANSFERASE 2, MITOCHONDRIAL"/>
    <property type="match status" value="1"/>
</dbReference>
<dbReference type="Pfam" id="PF01728">
    <property type="entry name" value="FtsJ"/>
    <property type="match status" value="1"/>
</dbReference>
<dbReference type="PIRSF" id="PIRSF005461">
    <property type="entry name" value="23S_rRNA_mtase"/>
    <property type="match status" value="1"/>
</dbReference>
<dbReference type="SUPFAM" id="SSF53335">
    <property type="entry name" value="S-adenosyl-L-methionine-dependent methyltransferases"/>
    <property type="match status" value="1"/>
</dbReference>
<proteinExistence type="inferred from homology"/>
<sequence length="227" mass="25694">MTNNLSGYRNKFVRVKTSKKRTVSSSNWLRRQLNDPYVAKARIDGFRSRAAYKLLEIHEKFKLFTPNMKIVDLGAAPGGWSQVASKLIKASDNNLNNKIISIDVLEIEHVAGVEFVQKDFFEADTEELIIQALDGRADIVMSDMASNTIGHKATDHIRTLLLCEQAFEFALKVLKPSGHFIAKIFRGGAENELLHKVKREFKTVKHFKPSSSRSESTEIYLVALNKK</sequence>